<organism evidence="5">
    <name type="scientific">Calliphora vicina</name>
    <name type="common">Blue blowfly</name>
    <name type="synonym">Calliphora erythrocephala</name>
    <dbReference type="NCBI Taxonomy" id="7373"/>
    <lineage>
        <taxon>Eukaryota</taxon>
        <taxon>Metazoa</taxon>
        <taxon>Ecdysozoa</taxon>
        <taxon>Arthropoda</taxon>
        <taxon>Hexapoda</taxon>
        <taxon>Insecta</taxon>
        <taxon>Pterygota</taxon>
        <taxon>Neoptera</taxon>
        <taxon>Endopterygota</taxon>
        <taxon>Diptera</taxon>
        <taxon>Brachycera</taxon>
        <taxon>Muscomorpha</taxon>
        <taxon>Oestroidea</taxon>
        <taxon>Calliphoridae</taxon>
        <taxon>Calliphorinae</taxon>
        <taxon>Calliphora</taxon>
    </lineage>
</organism>
<keyword id="KW-0677">Repeat</keyword>
<keyword id="KW-0716">Sensory transduction</keyword>
<keyword id="KW-0807">Transducer</keyword>
<keyword id="KW-0844">Vision</keyword>
<keyword id="KW-0853">WD repeat</keyword>
<comment type="function">
    <text evidence="4">Guanine nucleotide-binding proteins (G proteins) are involved as modulators or transducers in various transmembrane signaling systems. The beta and gamma chains are required for the GTPase activity, for replacement of GDP by GTP, and for G protein-effector interaction.</text>
</comment>
<comment type="subunit">
    <text evidence="2">G proteins are composed of 3 units, alpha, beta and gamma. Interacts with Ggammae/Guanine nucleotide-binding protein subunit gamma-e.</text>
</comment>
<comment type="similarity">
    <text evidence="4">Belongs to the WD repeat G protein beta family.</text>
</comment>
<dbReference type="EMBL" id="AJ250442">
    <property type="protein sequence ID" value="CAB76452.1"/>
    <property type="molecule type" value="mRNA"/>
</dbReference>
<dbReference type="SMR" id="Q9NFZ1"/>
<dbReference type="GO" id="GO:0007165">
    <property type="term" value="P:signal transduction"/>
    <property type="evidence" value="ECO:0007669"/>
    <property type="project" value="UniProtKB-KW"/>
</dbReference>
<dbReference type="GO" id="GO:0007601">
    <property type="term" value="P:visual perception"/>
    <property type="evidence" value="ECO:0007669"/>
    <property type="project" value="UniProtKB-KW"/>
</dbReference>
<dbReference type="CDD" id="cd00200">
    <property type="entry name" value="WD40"/>
    <property type="match status" value="1"/>
</dbReference>
<dbReference type="Gene3D" id="2.130.10.10">
    <property type="entry name" value="YVTN repeat-like/Quinoprotein amine dehydrogenase"/>
    <property type="match status" value="1"/>
</dbReference>
<dbReference type="InterPro" id="IPR020472">
    <property type="entry name" value="G-protein_beta_WD-40_rep"/>
</dbReference>
<dbReference type="InterPro" id="IPR001632">
    <property type="entry name" value="Gprotein_B"/>
</dbReference>
<dbReference type="InterPro" id="IPR016346">
    <property type="entry name" value="Guanine_nucleotide-bd_bsu"/>
</dbReference>
<dbReference type="InterPro" id="IPR015943">
    <property type="entry name" value="WD40/YVTN_repeat-like_dom_sf"/>
</dbReference>
<dbReference type="InterPro" id="IPR036322">
    <property type="entry name" value="WD40_repeat_dom_sf"/>
</dbReference>
<dbReference type="InterPro" id="IPR001680">
    <property type="entry name" value="WD40_rpt"/>
</dbReference>
<dbReference type="PANTHER" id="PTHR19850">
    <property type="entry name" value="GUANINE NUCLEOTIDE-BINDING PROTEIN BETA G PROTEIN BETA"/>
    <property type="match status" value="1"/>
</dbReference>
<dbReference type="Pfam" id="PF25391">
    <property type="entry name" value="WD40_Gbeta"/>
    <property type="match status" value="1"/>
</dbReference>
<dbReference type="PIRSF" id="PIRSF002394">
    <property type="entry name" value="GN-bd_beta"/>
    <property type="match status" value="1"/>
</dbReference>
<dbReference type="PRINTS" id="PR00319">
    <property type="entry name" value="GPROTEINB"/>
</dbReference>
<dbReference type="PRINTS" id="PR00320">
    <property type="entry name" value="GPROTEINBRPT"/>
</dbReference>
<dbReference type="SMART" id="SM00320">
    <property type="entry name" value="WD40"/>
    <property type="match status" value="7"/>
</dbReference>
<dbReference type="SUPFAM" id="SSF50978">
    <property type="entry name" value="WD40 repeat-like"/>
    <property type="match status" value="1"/>
</dbReference>
<dbReference type="PROSITE" id="PS00678">
    <property type="entry name" value="WD_REPEATS_1"/>
    <property type="match status" value="1"/>
</dbReference>
<dbReference type="PROSITE" id="PS50082">
    <property type="entry name" value="WD_REPEATS_2"/>
    <property type="match status" value="4"/>
</dbReference>
<dbReference type="PROSITE" id="PS50294">
    <property type="entry name" value="WD_REPEATS_REGION"/>
    <property type="match status" value="4"/>
</dbReference>
<protein>
    <recommendedName>
        <fullName evidence="4">Guanine nucleotide-binding protein subunit beta-2</fullName>
    </recommendedName>
</protein>
<name>GBB2_CALVI</name>
<feature type="chain" id="PRO_0000459209" description="Guanine nucleotide-binding protein subunit beta-2">
    <location>
        <begin position="1"/>
        <end position="346"/>
    </location>
</feature>
<feature type="repeat" description="WD 1" evidence="1">
    <location>
        <begin position="57"/>
        <end position="96"/>
    </location>
</feature>
<feature type="repeat" description="WD 2" evidence="1">
    <location>
        <begin position="99"/>
        <end position="138"/>
    </location>
</feature>
<feature type="repeat" description="WD 3" evidence="1">
    <location>
        <begin position="147"/>
        <end position="185"/>
    </location>
</feature>
<feature type="repeat" description="WD 4" evidence="1">
    <location>
        <begin position="188"/>
        <end position="227"/>
    </location>
</feature>
<feature type="repeat" description="WD 5" evidence="1">
    <location>
        <begin position="230"/>
        <end position="269"/>
    </location>
</feature>
<feature type="repeat" description="WD 6" evidence="1">
    <location>
        <begin position="274"/>
        <end position="313"/>
    </location>
</feature>
<feature type="repeat" description="WD 7" evidence="1">
    <location>
        <begin position="316"/>
        <end position="346"/>
    </location>
</feature>
<gene>
    <name evidence="3" type="primary">Gbetae</name>
</gene>
<evidence type="ECO:0000255" key="1"/>
<evidence type="ECO:0000269" key="2">
    <source>
    </source>
</evidence>
<evidence type="ECO:0000303" key="3">
    <source>
    </source>
</evidence>
<evidence type="ECO:0000305" key="4"/>
<evidence type="ECO:0000312" key="5">
    <source>
        <dbReference type="EMBL" id="CAB76452.1"/>
    </source>
</evidence>
<accession>Q9NFZ1</accession>
<proteinExistence type="evidence at protein level"/>
<reference evidence="5" key="1">
    <citation type="journal article" date="1999" name="J. Biol. Chem.">
        <title>A novel Ggamma isolated from Drosophila constitutes a visual G protein gamma subunit of the fly compound eye.</title>
        <authorList>
            <person name="Schulz S."/>
            <person name="Huber A."/>
            <person name="Schwab K."/>
            <person name="Paulsen R."/>
        </authorList>
    </citation>
    <scope>NUCLEOTIDE SEQUENCE [MRNA]</scope>
    <scope>INTERACTION WITH GGAMMAE</scope>
    <source>
        <tissue evidence="5">Eye</tissue>
    </source>
</reference>
<sequence length="346" mass="38384">MPKVDPETQKLYDEINGLIKKFQDDHKAKADCTMQEKCGDMSDIPKIRLSSKKILKGHINKVNSVHFAGDSRHCVTGSLDGKLIIWDTWTANKVQVIPLRSAWVMTVAFSPSGNFVACGGMDNQCTVYDVNNRDASGVAKMTRELLGYEGFLSSCRFLDDTHLITGSGDMKICHWDLEKGVKTMDFNGHAGDIAGLSLSPDMNTYITGSVDKTAKLWDVREETHKQMFFGHEMDVNSVCYHPSGNGFASASEDQTARLYDIRADQQIALYEPPQKNTGFTSCALSTSGRYLLCSGIEGNIHSFDTMKVCHNGMLQGHENRITCISLSPNGMCLASTSWDQQVRLWL</sequence>